<organism>
    <name type="scientific">Blochmanniella floridana</name>
    <dbReference type="NCBI Taxonomy" id="203907"/>
    <lineage>
        <taxon>Bacteria</taxon>
        <taxon>Pseudomonadati</taxon>
        <taxon>Pseudomonadota</taxon>
        <taxon>Gammaproteobacteria</taxon>
        <taxon>Enterobacterales</taxon>
        <taxon>Enterobacteriaceae</taxon>
        <taxon>ant endosymbionts</taxon>
        <taxon>Candidatus Blochmanniella</taxon>
    </lineage>
</organism>
<feature type="chain" id="PRO_0000137939" description="Glycerol-3-phosphate dehydrogenase [NAD(P)+]">
    <location>
        <begin position="1"/>
        <end position="333"/>
    </location>
</feature>
<feature type="active site" description="Proton acceptor" evidence="1">
    <location>
        <position position="193"/>
    </location>
</feature>
<feature type="binding site" evidence="1">
    <location>
        <position position="14"/>
    </location>
    <ligand>
        <name>NADPH</name>
        <dbReference type="ChEBI" id="CHEBI:57783"/>
    </ligand>
</feature>
<feature type="binding site" evidence="1">
    <location>
        <position position="34"/>
    </location>
    <ligand>
        <name>NADPH</name>
        <dbReference type="ChEBI" id="CHEBI:57783"/>
    </ligand>
</feature>
<feature type="binding site" evidence="1">
    <location>
        <position position="108"/>
    </location>
    <ligand>
        <name>NADPH</name>
        <dbReference type="ChEBI" id="CHEBI:57783"/>
    </ligand>
</feature>
<feature type="binding site" evidence="1">
    <location>
        <position position="108"/>
    </location>
    <ligand>
        <name>sn-glycerol 3-phosphate</name>
        <dbReference type="ChEBI" id="CHEBI:57597"/>
    </ligand>
</feature>
<feature type="binding site" evidence="1">
    <location>
        <position position="137"/>
    </location>
    <ligand>
        <name>sn-glycerol 3-phosphate</name>
        <dbReference type="ChEBI" id="CHEBI:57597"/>
    </ligand>
</feature>
<feature type="binding site" evidence="1">
    <location>
        <position position="139"/>
    </location>
    <ligand>
        <name>sn-glycerol 3-phosphate</name>
        <dbReference type="ChEBI" id="CHEBI:57597"/>
    </ligand>
</feature>
<feature type="binding site" evidence="1">
    <location>
        <position position="141"/>
    </location>
    <ligand>
        <name>NADPH</name>
        <dbReference type="ChEBI" id="CHEBI:57783"/>
    </ligand>
</feature>
<feature type="binding site" evidence="1">
    <location>
        <position position="193"/>
    </location>
    <ligand>
        <name>sn-glycerol 3-phosphate</name>
        <dbReference type="ChEBI" id="CHEBI:57597"/>
    </ligand>
</feature>
<feature type="binding site" evidence="1">
    <location>
        <position position="247"/>
    </location>
    <ligand>
        <name>sn-glycerol 3-phosphate</name>
        <dbReference type="ChEBI" id="CHEBI:57597"/>
    </ligand>
</feature>
<feature type="binding site" evidence="1">
    <location>
        <position position="257"/>
    </location>
    <ligand>
        <name>sn-glycerol 3-phosphate</name>
        <dbReference type="ChEBI" id="CHEBI:57597"/>
    </ligand>
</feature>
<feature type="binding site" evidence="1">
    <location>
        <position position="258"/>
    </location>
    <ligand>
        <name>NADPH</name>
        <dbReference type="ChEBI" id="CHEBI:57783"/>
    </ligand>
</feature>
<feature type="binding site" evidence="1">
    <location>
        <position position="258"/>
    </location>
    <ligand>
        <name>sn-glycerol 3-phosphate</name>
        <dbReference type="ChEBI" id="CHEBI:57597"/>
    </ligand>
</feature>
<feature type="binding site" evidence="1">
    <location>
        <position position="259"/>
    </location>
    <ligand>
        <name>sn-glycerol 3-phosphate</name>
        <dbReference type="ChEBI" id="CHEBI:57597"/>
    </ligand>
</feature>
<feature type="binding site" evidence="1">
    <location>
        <position position="282"/>
    </location>
    <ligand>
        <name>NADPH</name>
        <dbReference type="ChEBI" id="CHEBI:57783"/>
    </ligand>
</feature>
<feature type="binding site" evidence="1">
    <location>
        <position position="284"/>
    </location>
    <ligand>
        <name>NADPH</name>
        <dbReference type="ChEBI" id="CHEBI:57783"/>
    </ligand>
</feature>
<comment type="function">
    <text evidence="1">Catalyzes the reduction of the glycolytic intermediate dihydroxyacetone phosphate (DHAP) to sn-glycerol 3-phosphate (G3P), the key precursor for phospholipid synthesis.</text>
</comment>
<comment type="catalytic activity">
    <reaction evidence="1">
        <text>sn-glycerol 3-phosphate + NAD(+) = dihydroxyacetone phosphate + NADH + H(+)</text>
        <dbReference type="Rhea" id="RHEA:11092"/>
        <dbReference type="ChEBI" id="CHEBI:15378"/>
        <dbReference type="ChEBI" id="CHEBI:57540"/>
        <dbReference type="ChEBI" id="CHEBI:57597"/>
        <dbReference type="ChEBI" id="CHEBI:57642"/>
        <dbReference type="ChEBI" id="CHEBI:57945"/>
        <dbReference type="EC" id="1.1.1.94"/>
    </reaction>
    <physiologicalReaction direction="right-to-left" evidence="1">
        <dbReference type="Rhea" id="RHEA:11094"/>
    </physiologicalReaction>
</comment>
<comment type="catalytic activity">
    <reaction evidence="1">
        <text>sn-glycerol 3-phosphate + NADP(+) = dihydroxyacetone phosphate + NADPH + H(+)</text>
        <dbReference type="Rhea" id="RHEA:11096"/>
        <dbReference type="ChEBI" id="CHEBI:15378"/>
        <dbReference type="ChEBI" id="CHEBI:57597"/>
        <dbReference type="ChEBI" id="CHEBI:57642"/>
        <dbReference type="ChEBI" id="CHEBI:57783"/>
        <dbReference type="ChEBI" id="CHEBI:58349"/>
        <dbReference type="EC" id="1.1.1.94"/>
    </reaction>
    <physiologicalReaction direction="right-to-left" evidence="1">
        <dbReference type="Rhea" id="RHEA:11098"/>
    </physiologicalReaction>
</comment>
<comment type="pathway">
    <text evidence="1">Membrane lipid metabolism; glycerophospholipid metabolism.</text>
</comment>
<comment type="subcellular location">
    <subcellularLocation>
        <location evidence="1">Cytoplasm</location>
    </subcellularLocation>
</comment>
<comment type="similarity">
    <text evidence="1">Belongs to the NAD-dependent glycerol-3-phosphate dehydrogenase family.</text>
</comment>
<sequence length="333" mass="36420">MEKFSVTVIGAGVYGTAIAVAIAKHGNMVLLWGHNSQHIKILKIDRSNQVDLPGVFFPDSLYVEESLSVAADFSQNILIAVPSHVFRCVLLKLRLNLKNNFRIIIASKGLEPKTGWLLQDVVYDVLGKEVPCAVISGPTFAHELAIGLPAAIELASADIKFRYDIEHLLYSVKNLRVYKTTDVIGVQIAGAVKNVIAIGVGISDGMGFGANARAALITRGLSEMIRLGKSIGAISVDVFVGLAGLGDLVLTCTDDQSRNRRFGMLLGQGMHVDYAQKSIGQLIEGISNTKEVYMLSVKYKVIMPITEQIYKILYENKNVHEAVYSLIRRSYIL</sequence>
<gene>
    <name evidence="1" type="primary">gpsA</name>
    <name type="ordered locus">Bfl604</name>
</gene>
<keyword id="KW-0963">Cytoplasm</keyword>
<keyword id="KW-0444">Lipid biosynthesis</keyword>
<keyword id="KW-0443">Lipid metabolism</keyword>
<keyword id="KW-0520">NAD</keyword>
<keyword id="KW-0521">NADP</keyword>
<keyword id="KW-0547">Nucleotide-binding</keyword>
<keyword id="KW-0560">Oxidoreductase</keyword>
<keyword id="KW-0594">Phospholipid biosynthesis</keyword>
<keyword id="KW-1208">Phospholipid metabolism</keyword>
<keyword id="KW-1185">Reference proteome</keyword>
<proteinExistence type="inferred from homology"/>
<name>GPDA_BLOFL</name>
<reference key="1">
    <citation type="journal article" date="2003" name="Proc. Natl. Acad. Sci. U.S.A.">
        <title>The genome sequence of Blochmannia floridanus: comparative analysis of reduced genomes.</title>
        <authorList>
            <person name="Gil R."/>
            <person name="Silva F.J."/>
            <person name="Zientz E."/>
            <person name="Delmotte F."/>
            <person name="Gonzalez-Candelas F."/>
            <person name="Latorre A."/>
            <person name="Rausell C."/>
            <person name="Kamerbeek J."/>
            <person name="Gadau J."/>
            <person name="Hoelldobler B."/>
            <person name="van Ham R.C.H.J."/>
            <person name="Gross R."/>
            <person name="Moya A."/>
        </authorList>
    </citation>
    <scope>NUCLEOTIDE SEQUENCE [LARGE SCALE GENOMIC DNA]</scope>
</reference>
<evidence type="ECO:0000255" key="1">
    <source>
        <dbReference type="HAMAP-Rule" id="MF_00394"/>
    </source>
</evidence>
<accession>Q7VRK7</accession>
<protein>
    <recommendedName>
        <fullName evidence="1">Glycerol-3-phosphate dehydrogenase [NAD(P)+]</fullName>
        <ecNumber evidence="1">1.1.1.94</ecNumber>
    </recommendedName>
    <alternativeName>
        <fullName evidence="1">NAD(P)(+)-dependent glycerol-3-phosphate dehydrogenase</fullName>
    </alternativeName>
    <alternativeName>
        <fullName evidence="1">NAD(P)H-dependent dihydroxyacetone-phosphate reductase</fullName>
    </alternativeName>
</protein>
<dbReference type="EC" id="1.1.1.94" evidence="1"/>
<dbReference type="EMBL" id="BX248583">
    <property type="protein sequence ID" value="CAD83279.1"/>
    <property type="molecule type" value="Genomic_DNA"/>
</dbReference>
<dbReference type="SMR" id="Q7VRK7"/>
<dbReference type="STRING" id="203907.Bfl604"/>
<dbReference type="KEGG" id="bfl:Bfl604"/>
<dbReference type="eggNOG" id="COG0240">
    <property type="taxonomic scope" value="Bacteria"/>
</dbReference>
<dbReference type="HOGENOM" id="CLU_033449_0_2_6"/>
<dbReference type="OrthoDB" id="9812273at2"/>
<dbReference type="UniPathway" id="UPA00940"/>
<dbReference type="Proteomes" id="UP000002192">
    <property type="component" value="Chromosome"/>
</dbReference>
<dbReference type="GO" id="GO:0005829">
    <property type="term" value="C:cytosol"/>
    <property type="evidence" value="ECO:0007669"/>
    <property type="project" value="TreeGrafter"/>
</dbReference>
<dbReference type="GO" id="GO:0047952">
    <property type="term" value="F:glycerol-3-phosphate dehydrogenase [NAD(P)+] activity"/>
    <property type="evidence" value="ECO:0007669"/>
    <property type="project" value="UniProtKB-UniRule"/>
</dbReference>
<dbReference type="GO" id="GO:0051287">
    <property type="term" value="F:NAD binding"/>
    <property type="evidence" value="ECO:0007669"/>
    <property type="project" value="InterPro"/>
</dbReference>
<dbReference type="GO" id="GO:0005975">
    <property type="term" value="P:carbohydrate metabolic process"/>
    <property type="evidence" value="ECO:0007669"/>
    <property type="project" value="InterPro"/>
</dbReference>
<dbReference type="GO" id="GO:0046167">
    <property type="term" value="P:glycerol-3-phosphate biosynthetic process"/>
    <property type="evidence" value="ECO:0007669"/>
    <property type="project" value="UniProtKB-UniRule"/>
</dbReference>
<dbReference type="GO" id="GO:0046168">
    <property type="term" value="P:glycerol-3-phosphate catabolic process"/>
    <property type="evidence" value="ECO:0007669"/>
    <property type="project" value="InterPro"/>
</dbReference>
<dbReference type="GO" id="GO:0046474">
    <property type="term" value="P:glycerophospholipid biosynthetic process"/>
    <property type="evidence" value="ECO:0007669"/>
    <property type="project" value="TreeGrafter"/>
</dbReference>
<dbReference type="FunFam" id="1.10.1040.10:FF:000001">
    <property type="entry name" value="Glycerol-3-phosphate dehydrogenase [NAD(P)+]"/>
    <property type="match status" value="1"/>
</dbReference>
<dbReference type="FunFam" id="3.40.50.720:FF:000019">
    <property type="entry name" value="Glycerol-3-phosphate dehydrogenase [NAD(P)+]"/>
    <property type="match status" value="1"/>
</dbReference>
<dbReference type="Gene3D" id="1.10.1040.10">
    <property type="entry name" value="N-(1-d-carboxylethyl)-l-norvaline Dehydrogenase, domain 2"/>
    <property type="match status" value="1"/>
</dbReference>
<dbReference type="Gene3D" id="3.40.50.720">
    <property type="entry name" value="NAD(P)-binding Rossmann-like Domain"/>
    <property type="match status" value="1"/>
</dbReference>
<dbReference type="HAMAP" id="MF_00394">
    <property type="entry name" value="NAD_Glyc3P_dehydrog"/>
    <property type="match status" value="1"/>
</dbReference>
<dbReference type="InterPro" id="IPR008927">
    <property type="entry name" value="6-PGluconate_DH-like_C_sf"/>
</dbReference>
<dbReference type="InterPro" id="IPR013328">
    <property type="entry name" value="6PGD_dom2"/>
</dbReference>
<dbReference type="InterPro" id="IPR006168">
    <property type="entry name" value="G3P_DH_NAD-dep"/>
</dbReference>
<dbReference type="InterPro" id="IPR006109">
    <property type="entry name" value="G3P_DH_NAD-dep_C"/>
</dbReference>
<dbReference type="InterPro" id="IPR011128">
    <property type="entry name" value="G3P_DH_NAD-dep_N"/>
</dbReference>
<dbReference type="InterPro" id="IPR036291">
    <property type="entry name" value="NAD(P)-bd_dom_sf"/>
</dbReference>
<dbReference type="NCBIfam" id="NF000939">
    <property type="entry name" value="PRK00094.1-1"/>
    <property type="match status" value="1"/>
</dbReference>
<dbReference type="NCBIfam" id="NF000940">
    <property type="entry name" value="PRK00094.1-2"/>
    <property type="match status" value="1"/>
</dbReference>
<dbReference type="NCBIfam" id="NF000942">
    <property type="entry name" value="PRK00094.1-4"/>
    <property type="match status" value="1"/>
</dbReference>
<dbReference type="PANTHER" id="PTHR11728">
    <property type="entry name" value="GLYCEROL-3-PHOSPHATE DEHYDROGENASE"/>
    <property type="match status" value="1"/>
</dbReference>
<dbReference type="PANTHER" id="PTHR11728:SF1">
    <property type="entry name" value="GLYCEROL-3-PHOSPHATE DEHYDROGENASE [NAD(+)] 2, CHLOROPLASTIC"/>
    <property type="match status" value="1"/>
</dbReference>
<dbReference type="Pfam" id="PF07479">
    <property type="entry name" value="NAD_Gly3P_dh_C"/>
    <property type="match status" value="1"/>
</dbReference>
<dbReference type="Pfam" id="PF01210">
    <property type="entry name" value="NAD_Gly3P_dh_N"/>
    <property type="match status" value="1"/>
</dbReference>
<dbReference type="PIRSF" id="PIRSF000114">
    <property type="entry name" value="Glycerol-3-P_dh"/>
    <property type="match status" value="1"/>
</dbReference>
<dbReference type="PRINTS" id="PR00077">
    <property type="entry name" value="GPDHDRGNASE"/>
</dbReference>
<dbReference type="SUPFAM" id="SSF48179">
    <property type="entry name" value="6-phosphogluconate dehydrogenase C-terminal domain-like"/>
    <property type="match status" value="1"/>
</dbReference>
<dbReference type="SUPFAM" id="SSF51735">
    <property type="entry name" value="NAD(P)-binding Rossmann-fold domains"/>
    <property type="match status" value="1"/>
</dbReference>
<dbReference type="PROSITE" id="PS00957">
    <property type="entry name" value="NAD_G3PDH"/>
    <property type="match status" value="1"/>
</dbReference>